<accession>A7HQQ1</accession>
<sequence>MKFRPLHDRVVVRRVEEESKTAGGIIIPDSAQEKPSQGEVVAVGPGARGDDGKLVALDVKVGDRVIFGKWSGTEVKIDGEELLIMKESDIMGVLEGAASKKKAAA</sequence>
<dbReference type="EMBL" id="CP000774">
    <property type="protein sequence ID" value="ABS62234.1"/>
    <property type="molecule type" value="Genomic_DNA"/>
</dbReference>
<dbReference type="RefSeq" id="WP_011995525.1">
    <property type="nucleotide sequence ID" value="NC_009719.1"/>
</dbReference>
<dbReference type="SMR" id="A7HQQ1"/>
<dbReference type="STRING" id="402881.Plav_0611"/>
<dbReference type="KEGG" id="pla:Plav_0611"/>
<dbReference type="eggNOG" id="COG0234">
    <property type="taxonomic scope" value="Bacteria"/>
</dbReference>
<dbReference type="HOGENOM" id="CLU_132825_1_0_5"/>
<dbReference type="OrthoDB" id="9806791at2"/>
<dbReference type="Proteomes" id="UP000006377">
    <property type="component" value="Chromosome"/>
</dbReference>
<dbReference type="GO" id="GO:0005737">
    <property type="term" value="C:cytoplasm"/>
    <property type="evidence" value="ECO:0007669"/>
    <property type="project" value="UniProtKB-SubCell"/>
</dbReference>
<dbReference type="GO" id="GO:0005524">
    <property type="term" value="F:ATP binding"/>
    <property type="evidence" value="ECO:0007669"/>
    <property type="project" value="InterPro"/>
</dbReference>
<dbReference type="GO" id="GO:0046872">
    <property type="term" value="F:metal ion binding"/>
    <property type="evidence" value="ECO:0007669"/>
    <property type="project" value="TreeGrafter"/>
</dbReference>
<dbReference type="GO" id="GO:0044183">
    <property type="term" value="F:protein folding chaperone"/>
    <property type="evidence" value="ECO:0007669"/>
    <property type="project" value="InterPro"/>
</dbReference>
<dbReference type="GO" id="GO:0051087">
    <property type="term" value="F:protein-folding chaperone binding"/>
    <property type="evidence" value="ECO:0007669"/>
    <property type="project" value="TreeGrafter"/>
</dbReference>
<dbReference type="GO" id="GO:0051082">
    <property type="term" value="F:unfolded protein binding"/>
    <property type="evidence" value="ECO:0007669"/>
    <property type="project" value="TreeGrafter"/>
</dbReference>
<dbReference type="GO" id="GO:0051085">
    <property type="term" value="P:chaperone cofactor-dependent protein refolding"/>
    <property type="evidence" value="ECO:0007669"/>
    <property type="project" value="TreeGrafter"/>
</dbReference>
<dbReference type="CDD" id="cd00320">
    <property type="entry name" value="cpn10"/>
    <property type="match status" value="1"/>
</dbReference>
<dbReference type="FunFam" id="2.30.33.40:FF:000001">
    <property type="entry name" value="10 kDa chaperonin"/>
    <property type="match status" value="1"/>
</dbReference>
<dbReference type="Gene3D" id="2.30.33.40">
    <property type="entry name" value="GroES chaperonin"/>
    <property type="match status" value="1"/>
</dbReference>
<dbReference type="HAMAP" id="MF_00580">
    <property type="entry name" value="CH10"/>
    <property type="match status" value="1"/>
</dbReference>
<dbReference type="InterPro" id="IPR020818">
    <property type="entry name" value="Chaperonin_GroES"/>
</dbReference>
<dbReference type="InterPro" id="IPR037124">
    <property type="entry name" value="Chaperonin_GroES_sf"/>
</dbReference>
<dbReference type="InterPro" id="IPR018369">
    <property type="entry name" value="Chaprnonin_Cpn10_CS"/>
</dbReference>
<dbReference type="InterPro" id="IPR011032">
    <property type="entry name" value="GroES-like_sf"/>
</dbReference>
<dbReference type="NCBIfam" id="NF001527">
    <property type="entry name" value="PRK00364.1-2"/>
    <property type="match status" value="1"/>
</dbReference>
<dbReference type="NCBIfam" id="NF001529">
    <property type="entry name" value="PRK00364.1-5"/>
    <property type="match status" value="1"/>
</dbReference>
<dbReference type="NCBIfam" id="NF001531">
    <property type="entry name" value="PRK00364.2-2"/>
    <property type="match status" value="1"/>
</dbReference>
<dbReference type="NCBIfam" id="NF001533">
    <property type="entry name" value="PRK00364.2-4"/>
    <property type="match status" value="1"/>
</dbReference>
<dbReference type="NCBIfam" id="NF001534">
    <property type="entry name" value="PRK00364.2-5"/>
    <property type="match status" value="1"/>
</dbReference>
<dbReference type="PANTHER" id="PTHR10772">
    <property type="entry name" value="10 KDA HEAT SHOCK PROTEIN"/>
    <property type="match status" value="1"/>
</dbReference>
<dbReference type="PANTHER" id="PTHR10772:SF58">
    <property type="entry name" value="CO-CHAPERONIN GROES"/>
    <property type="match status" value="1"/>
</dbReference>
<dbReference type="Pfam" id="PF00166">
    <property type="entry name" value="Cpn10"/>
    <property type="match status" value="1"/>
</dbReference>
<dbReference type="PRINTS" id="PR00297">
    <property type="entry name" value="CHAPERONIN10"/>
</dbReference>
<dbReference type="SMART" id="SM00883">
    <property type="entry name" value="Cpn10"/>
    <property type="match status" value="1"/>
</dbReference>
<dbReference type="SUPFAM" id="SSF50129">
    <property type="entry name" value="GroES-like"/>
    <property type="match status" value="1"/>
</dbReference>
<dbReference type="PROSITE" id="PS00681">
    <property type="entry name" value="CHAPERONINS_CPN10"/>
    <property type="match status" value="1"/>
</dbReference>
<reference key="1">
    <citation type="journal article" date="2011" name="Stand. Genomic Sci.">
        <title>Complete genome sequence of Parvibaculum lavamentivorans type strain (DS-1(T)).</title>
        <authorList>
            <person name="Schleheck D."/>
            <person name="Weiss M."/>
            <person name="Pitluck S."/>
            <person name="Bruce D."/>
            <person name="Land M.L."/>
            <person name="Han S."/>
            <person name="Saunders E."/>
            <person name="Tapia R."/>
            <person name="Detter C."/>
            <person name="Brettin T."/>
            <person name="Han J."/>
            <person name="Woyke T."/>
            <person name="Goodwin L."/>
            <person name="Pennacchio L."/>
            <person name="Nolan M."/>
            <person name="Cook A.M."/>
            <person name="Kjelleberg S."/>
            <person name="Thomas T."/>
        </authorList>
    </citation>
    <scope>NUCLEOTIDE SEQUENCE [LARGE SCALE GENOMIC DNA]</scope>
    <source>
        <strain>DS-1 / DSM 13023 / NCIMB 13966</strain>
    </source>
</reference>
<evidence type="ECO:0000255" key="1">
    <source>
        <dbReference type="HAMAP-Rule" id="MF_00580"/>
    </source>
</evidence>
<gene>
    <name evidence="1" type="primary">groES</name>
    <name evidence="1" type="synonym">groS</name>
    <name type="ordered locus">Plav_0611</name>
</gene>
<organism>
    <name type="scientific">Parvibaculum lavamentivorans (strain DS-1 / DSM 13023 / NCIMB 13966)</name>
    <dbReference type="NCBI Taxonomy" id="402881"/>
    <lineage>
        <taxon>Bacteria</taxon>
        <taxon>Pseudomonadati</taxon>
        <taxon>Pseudomonadota</taxon>
        <taxon>Alphaproteobacteria</taxon>
        <taxon>Hyphomicrobiales</taxon>
        <taxon>Parvibaculaceae</taxon>
        <taxon>Parvibaculum</taxon>
    </lineage>
</organism>
<keyword id="KW-0143">Chaperone</keyword>
<keyword id="KW-0963">Cytoplasm</keyword>
<keyword id="KW-1185">Reference proteome</keyword>
<protein>
    <recommendedName>
        <fullName evidence="1">Co-chaperonin GroES</fullName>
    </recommendedName>
    <alternativeName>
        <fullName evidence="1">10 kDa chaperonin</fullName>
    </alternativeName>
    <alternativeName>
        <fullName evidence="1">Chaperonin-10</fullName>
        <shortName evidence="1">Cpn10</shortName>
    </alternativeName>
</protein>
<name>CH10_PARL1</name>
<comment type="function">
    <text evidence="1">Together with the chaperonin GroEL, plays an essential role in assisting protein folding. The GroEL-GroES system forms a nano-cage that allows encapsulation of the non-native substrate proteins and provides a physical environment optimized to promote and accelerate protein folding. GroES binds to the apical surface of the GroEL ring, thereby capping the opening of the GroEL channel.</text>
</comment>
<comment type="subunit">
    <text evidence="1">Heptamer of 7 subunits arranged in a ring. Interacts with the chaperonin GroEL.</text>
</comment>
<comment type="subcellular location">
    <subcellularLocation>
        <location evidence="1">Cytoplasm</location>
    </subcellularLocation>
</comment>
<comment type="similarity">
    <text evidence="1">Belongs to the GroES chaperonin family.</text>
</comment>
<feature type="chain" id="PRO_1000072586" description="Co-chaperonin GroES">
    <location>
        <begin position="1"/>
        <end position="105"/>
    </location>
</feature>
<proteinExistence type="inferred from homology"/>